<name>LTN1_CAEEL</name>
<accession>Q65XX2</accession>
<proteinExistence type="inferred from homology"/>
<protein>
    <recommendedName>
        <fullName>E3 ubiquitin-protein ligase listerin</fullName>
        <ecNumber evidence="2">2.3.2.27</ecNumber>
    </recommendedName>
    <alternativeName>
        <fullName evidence="5">RING-type E3 ubiquitin transferase listerin</fullName>
    </alternativeName>
</protein>
<feature type="chain" id="PRO_0000404571" description="E3 ubiquitin-protein ligase listerin">
    <location>
        <begin position="1"/>
        <end position="1446"/>
    </location>
</feature>
<feature type="repeat" description="HEAT 1" evidence="3">
    <location>
        <begin position="71"/>
        <end position="108"/>
    </location>
</feature>
<feature type="repeat" description="HEAT 2" evidence="3">
    <location>
        <begin position="115"/>
        <end position="153"/>
    </location>
</feature>
<feature type="repeat" description="HEAT 3" evidence="3">
    <location>
        <begin position="324"/>
        <end position="361"/>
    </location>
</feature>
<feature type="repeat" description="HEAT 4" evidence="3">
    <location>
        <begin position="363"/>
        <end position="399"/>
    </location>
</feature>
<feature type="repeat" description="HEAT 5" evidence="3">
    <location>
        <begin position="413"/>
        <end position="450"/>
    </location>
</feature>
<feature type="repeat" description="HEAT 6" evidence="3">
    <location>
        <begin position="630"/>
        <end position="669"/>
    </location>
</feature>
<feature type="repeat" description="HEAT 7" evidence="3">
    <location>
        <begin position="684"/>
        <end position="721"/>
    </location>
</feature>
<feature type="repeat" description="HEAT 8" evidence="3">
    <location>
        <begin position="1046"/>
        <end position="1083"/>
    </location>
</feature>
<feature type="repeat" description="HEAT 9" evidence="3">
    <location>
        <begin position="1107"/>
        <end position="1144"/>
    </location>
</feature>
<feature type="repeat" description="HEAT 10" evidence="3">
    <location>
        <begin position="1165"/>
        <end position="1202"/>
    </location>
</feature>
<feature type="repeat" description="HEAT 11" evidence="3">
    <location>
        <begin position="1251"/>
        <end position="1289"/>
    </location>
</feature>
<feature type="zinc finger region" description="RING-type" evidence="4">
    <location>
        <begin position="1395"/>
        <end position="1442"/>
    </location>
</feature>
<gene>
    <name type="ORF">Y54E10A.11</name>
</gene>
<dbReference type="EC" id="2.3.2.27" evidence="2"/>
<dbReference type="EMBL" id="FO081614">
    <property type="protein sequence ID" value="CCD72830.1"/>
    <property type="molecule type" value="Genomic_DNA"/>
</dbReference>
<dbReference type="RefSeq" id="NP_491118.2">
    <property type="nucleotide sequence ID" value="NM_058717.6"/>
</dbReference>
<dbReference type="SMR" id="Q65XX2"/>
<dbReference type="BioGRID" id="37370">
    <property type="interactions" value="5"/>
</dbReference>
<dbReference type="FunCoup" id="Q65XX2">
    <property type="interactions" value="3271"/>
</dbReference>
<dbReference type="STRING" id="6239.Y54E10A.11.1"/>
<dbReference type="PaxDb" id="6239-Y54E10A.11"/>
<dbReference type="PeptideAtlas" id="Q65XX2"/>
<dbReference type="EnsemblMetazoa" id="Y54E10A.11.1">
    <property type="protein sequence ID" value="Y54E10A.11.1"/>
    <property type="gene ID" value="WBGene00021831"/>
</dbReference>
<dbReference type="EnsemblMetazoa" id="Y54E10A.11.2">
    <property type="protein sequence ID" value="Y54E10A.11.2"/>
    <property type="gene ID" value="WBGene00021831"/>
</dbReference>
<dbReference type="GeneID" id="171893"/>
<dbReference type="KEGG" id="cel:CELE_Y54E10A.11"/>
<dbReference type="UCSC" id="Y54E10A.11">
    <property type="organism name" value="c. elegans"/>
</dbReference>
<dbReference type="AGR" id="WB:WBGene00021831"/>
<dbReference type="CTD" id="171893"/>
<dbReference type="WormBase" id="Y54E10A.11">
    <property type="protein sequence ID" value="CE37436"/>
    <property type="gene ID" value="WBGene00021831"/>
</dbReference>
<dbReference type="eggNOG" id="KOG0803">
    <property type="taxonomic scope" value="Eukaryota"/>
</dbReference>
<dbReference type="GeneTree" id="ENSGT00390000016055"/>
<dbReference type="HOGENOM" id="CLU_004730_0_0_1"/>
<dbReference type="InParanoid" id="Q65XX2"/>
<dbReference type="OMA" id="QWYIKLP"/>
<dbReference type="OrthoDB" id="6108at2759"/>
<dbReference type="Reactome" id="R-CEL-983168">
    <property type="pathway name" value="Antigen processing: Ubiquitination &amp; Proteasome degradation"/>
</dbReference>
<dbReference type="UniPathway" id="UPA00143"/>
<dbReference type="PRO" id="PR:Q65XX2"/>
<dbReference type="Proteomes" id="UP000001940">
    <property type="component" value="Chromosome I"/>
</dbReference>
<dbReference type="Bgee" id="WBGene00021831">
    <property type="expression patterns" value="Expressed in germ line (C elegans) and 4 other cell types or tissues"/>
</dbReference>
<dbReference type="GO" id="GO:0005829">
    <property type="term" value="C:cytosol"/>
    <property type="evidence" value="ECO:0000250"/>
    <property type="project" value="UniProtKB"/>
</dbReference>
<dbReference type="GO" id="GO:1990112">
    <property type="term" value="C:RQC complex"/>
    <property type="evidence" value="ECO:0000318"/>
    <property type="project" value="GO_Central"/>
</dbReference>
<dbReference type="GO" id="GO:0043023">
    <property type="term" value="F:ribosomal large subunit binding"/>
    <property type="evidence" value="ECO:0000318"/>
    <property type="project" value="GO_Central"/>
</dbReference>
<dbReference type="GO" id="GO:0061630">
    <property type="term" value="F:ubiquitin protein ligase activity"/>
    <property type="evidence" value="ECO:0000318"/>
    <property type="project" value="GO_Central"/>
</dbReference>
<dbReference type="GO" id="GO:0008270">
    <property type="term" value="F:zinc ion binding"/>
    <property type="evidence" value="ECO:0007669"/>
    <property type="project" value="UniProtKB-KW"/>
</dbReference>
<dbReference type="GO" id="GO:0016567">
    <property type="term" value="P:protein ubiquitination"/>
    <property type="evidence" value="ECO:0007669"/>
    <property type="project" value="UniProtKB-UniPathway"/>
</dbReference>
<dbReference type="GO" id="GO:0072344">
    <property type="term" value="P:rescue of stalled ribosome"/>
    <property type="evidence" value="ECO:0000318"/>
    <property type="project" value="GO_Central"/>
</dbReference>
<dbReference type="GO" id="GO:1990116">
    <property type="term" value="P:ribosome-associated ubiquitin-dependent protein catabolic process"/>
    <property type="evidence" value="ECO:0000318"/>
    <property type="project" value="GO_Central"/>
</dbReference>
<dbReference type="CDD" id="cd16491">
    <property type="entry name" value="RING-CH-C4HC3_LTN1"/>
    <property type="match status" value="1"/>
</dbReference>
<dbReference type="FunFam" id="3.30.40.10:FF:000038">
    <property type="entry name" value="E3 ubiquitin-protein ligase listerin"/>
    <property type="match status" value="1"/>
</dbReference>
<dbReference type="Gene3D" id="1.25.10.10">
    <property type="entry name" value="Leucine-rich Repeat Variant"/>
    <property type="match status" value="1"/>
</dbReference>
<dbReference type="Gene3D" id="3.30.40.10">
    <property type="entry name" value="Zinc/RING finger domain, C3HC4 (zinc finger)"/>
    <property type="match status" value="1"/>
</dbReference>
<dbReference type="InterPro" id="IPR011989">
    <property type="entry name" value="ARM-like"/>
</dbReference>
<dbReference type="InterPro" id="IPR016024">
    <property type="entry name" value="ARM-type_fold"/>
</dbReference>
<dbReference type="InterPro" id="IPR039795">
    <property type="entry name" value="LTN1/Rkr1"/>
</dbReference>
<dbReference type="InterPro" id="IPR056241">
    <property type="entry name" value="LTN1_HEAT_5th"/>
</dbReference>
<dbReference type="InterPro" id="IPR054478">
    <property type="entry name" value="LTN1_UBC"/>
</dbReference>
<dbReference type="InterPro" id="IPR039804">
    <property type="entry name" value="RING-CH-C4HC3_LTN1"/>
</dbReference>
<dbReference type="InterPro" id="IPR001841">
    <property type="entry name" value="Znf_RING"/>
</dbReference>
<dbReference type="InterPro" id="IPR013083">
    <property type="entry name" value="Znf_RING/FYVE/PHD"/>
</dbReference>
<dbReference type="PANTHER" id="PTHR12389:SF0">
    <property type="entry name" value="E3 UBIQUITIN-PROTEIN LIGASE LISTERIN"/>
    <property type="match status" value="1"/>
</dbReference>
<dbReference type="PANTHER" id="PTHR12389">
    <property type="entry name" value="ZINC FINGER PROTEIN 294"/>
    <property type="match status" value="1"/>
</dbReference>
<dbReference type="Pfam" id="PF24618">
    <property type="entry name" value="LTN1_E3_ligase_5th"/>
    <property type="match status" value="1"/>
</dbReference>
<dbReference type="Pfam" id="PF23009">
    <property type="entry name" value="UBC_like"/>
    <property type="match status" value="1"/>
</dbReference>
<dbReference type="Pfam" id="PF13639">
    <property type="entry name" value="zf-RING_2"/>
    <property type="match status" value="1"/>
</dbReference>
<dbReference type="SMART" id="SM01197">
    <property type="entry name" value="FANCL_C"/>
    <property type="match status" value="1"/>
</dbReference>
<dbReference type="SMART" id="SM00184">
    <property type="entry name" value="RING"/>
    <property type="match status" value="1"/>
</dbReference>
<dbReference type="SUPFAM" id="SSF48371">
    <property type="entry name" value="ARM repeat"/>
    <property type="match status" value="1"/>
</dbReference>
<dbReference type="SUPFAM" id="SSF57850">
    <property type="entry name" value="RING/U-box"/>
    <property type="match status" value="1"/>
</dbReference>
<dbReference type="PROSITE" id="PS50089">
    <property type="entry name" value="ZF_RING_2"/>
    <property type="match status" value="1"/>
</dbReference>
<keyword id="KW-0963">Cytoplasm</keyword>
<keyword id="KW-0479">Metal-binding</keyword>
<keyword id="KW-1185">Reference proteome</keyword>
<keyword id="KW-0677">Repeat</keyword>
<keyword id="KW-0808">Transferase</keyword>
<keyword id="KW-0833">Ubl conjugation pathway</keyword>
<keyword id="KW-0862">Zinc</keyword>
<keyword id="KW-0863">Zinc-finger</keyword>
<comment type="function">
    <text evidence="1 2">E3 ubiquitin-protein ligase. Component of the ribosome quality control complex (RQC), a ribosome-associated complex that mediates ubiquitination and extraction of incompletely synthesized nascent chains for proteasomal degradation. Ubiquitination leads to vcp/p97 recruitment for extraction and degradation of the incomplete translation product.</text>
</comment>
<comment type="catalytic activity">
    <reaction evidence="2">
        <text>S-ubiquitinyl-[E2 ubiquitin-conjugating enzyme]-L-cysteine + [acceptor protein]-L-lysine = [E2 ubiquitin-conjugating enzyme]-L-cysteine + N(6)-ubiquitinyl-[acceptor protein]-L-lysine.</text>
        <dbReference type="EC" id="2.3.2.27"/>
    </reaction>
</comment>
<comment type="pathway">
    <text>Protein modification; protein ubiquitination.</text>
</comment>
<comment type="subunit">
    <text evidence="1 2">Component of the ribosome quality control complex (RQC), composed of at least the E3 ubiquitin ligase ltn1 and nemf. The complex probably also contains tcf25 as well as vcp/p97 and its ubiquitin-binding cofactors. RQC forms a stable complex with 60S ribosomal subunits.</text>
</comment>
<comment type="subcellular location">
    <subcellularLocation>
        <location evidence="1">Cytoplasm</location>
        <location evidence="1">Cytosol</location>
    </subcellularLocation>
</comment>
<comment type="similarity">
    <text evidence="5">Belongs to the LTN1 family.</text>
</comment>
<evidence type="ECO:0000250" key="1">
    <source>
        <dbReference type="UniProtKB" id="O94822"/>
    </source>
</evidence>
<evidence type="ECO:0000250" key="2">
    <source>
        <dbReference type="UniProtKB" id="Q04781"/>
    </source>
</evidence>
<evidence type="ECO:0000255" key="3"/>
<evidence type="ECO:0000255" key="4">
    <source>
        <dbReference type="PROSITE-ProRule" id="PRU00175"/>
    </source>
</evidence>
<evidence type="ECO:0000305" key="5"/>
<sequence length="1446" mass="165403">MSKQQRRKGNAKNASSAAAHEYLAQGGATFVGLTPEMNIFEVASSNRLHQVVEIDDETRIVMKKLTKKDCQTREKGLKELMELINTENSSIESSYEHFCGLVAQLTTDGSPTVRMLTMKVISQFLTKLKKSASKGLKKIIPFVLFAKSDVTNGVAAAASAVIRDGFDADKKRQVVELFVPNTFDLAAKIAEGKHELSLPAEYDASEDLETRKMRLETQSLNTFLSYIKEYGNESKLWEEPARKLFSNSEFIKKTFAGKKEALKVQLLNISYKFSDNIEVILSNPVISTYIQASLDAQTFSTECATAWEGILILLPDERFHAKCSLQKGIYPRLLNLIRKKGNHWRVLKHYLLPAVSVLLQKLENPALITSIITSFTDNLPWQAEASMNAIHCWFCTFSDFVKWILGNDRINLEILKDLSPLIVEMSNQSMHFNTAEATECISGLIHWIIEKKVLENPAEFFDLLKTSIYEVAPPEKSRLFADSLTLPAKHLELAHLHGNLLSNPDVDFHIIRNLARASNSEYFEETCRNINNFEFIENSDRFDMLQAVEIVKLIEMKPSLSLQIKNNHVGRQLLLSENSEIWEKSLKNVPAGVFQEMVNFWHEKRNGKAIAQAVNFLKKMGIQLDTNAAAENVDFLISLLQSLDSKEDPEERKNLVLKLLSALFDAEDEPKLEHFESLKSHLNGDFEQFFEKLFANMEEEDAERVLEIAARFDKLVGFCDADSRGEIAGKMILGRREFDEMSEKLHFLELDVLTVSQHTTIITDALSRPIEHLEEKEATKMVKELGRLALFSVASNYNSSIHQLFAWQMIRVISALGNRYCLKFLDEELQQLRIELEKRVIKSEEIQKLINDGCCCAPNFITDTYGIPEKRQKFEEYSEDMDTKIETIYLKTDTPLEYVEKVFEASQSENSFPLFQFDQSKKYEWLANLTFVKRFIQCGGEIFRAENLEFRDFTLCGIITVLDTSTDILIDSPHSFSENPLLEALTTLYLELFVVLTDATKRGAYSEQSVEEWNEFYTPTIHTYCIRLFRTIRRDQQPTPFVRALLRALFVISEFPTSFSNDDDVANQEFIPELSVFKYPAFQESCIAQAFSLFASNNEHIQLIAYSVARLLMPIMFKLENAAALKSNEDSELPVSTNRRKLSLPVMISKSYPKDHHNPHVGPLLLDLTLLPLENTKDSGFSQEHRVAYCDVIDPFFKNALNALMLDQPFEFRQVPIGCRIPKSQERAYYLESDLSASPIFFDKFASRLLFKSMTLLPAAIRLFYKGMPNCFMPMFQETVTKYASRLLIEQELGKVREAKFEGEMKVRTVPVTGEIIAEYVVEETKMKLTIGLPPDYPLSVPSLTLDKAIVKTDRAKKWLLQLNAYLFHQNGAILEGIEMWKRNVDKGVEGVEDCTICMMTVHQQTHQLPKIKCKQCKNKFHSNCLYKWFESSNQSTCPLCRNNFT</sequence>
<reference key="1">
    <citation type="journal article" date="1998" name="Science">
        <title>Genome sequence of the nematode C. elegans: a platform for investigating biology.</title>
        <authorList>
            <consortium name="The C. elegans sequencing consortium"/>
        </authorList>
    </citation>
    <scope>NUCLEOTIDE SEQUENCE [LARGE SCALE GENOMIC DNA]</scope>
    <source>
        <strain>Bristol N2</strain>
    </source>
</reference>
<organism>
    <name type="scientific">Caenorhabditis elegans</name>
    <dbReference type="NCBI Taxonomy" id="6239"/>
    <lineage>
        <taxon>Eukaryota</taxon>
        <taxon>Metazoa</taxon>
        <taxon>Ecdysozoa</taxon>
        <taxon>Nematoda</taxon>
        <taxon>Chromadorea</taxon>
        <taxon>Rhabditida</taxon>
        <taxon>Rhabditina</taxon>
        <taxon>Rhabditomorpha</taxon>
        <taxon>Rhabditoidea</taxon>
        <taxon>Rhabditidae</taxon>
        <taxon>Peloderinae</taxon>
        <taxon>Caenorhabditis</taxon>
    </lineage>
</organism>